<organism>
    <name type="scientific">Alteromonas mediterranea (strain DSM 17117 / CIP 110805 / LMG 28347 / Deep ecotype)</name>
    <dbReference type="NCBI Taxonomy" id="1774373"/>
    <lineage>
        <taxon>Bacteria</taxon>
        <taxon>Pseudomonadati</taxon>
        <taxon>Pseudomonadota</taxon>
        <taxon>Gammaproteobacteria</taxon>
        <taxon>Alteromonadales</taxon>
        <taxon>Alteromonadaceae</taxon>
        <taxon>Alteromonas/Salinimonas group</taxon>
        <taxon>Alteromonas</taxon>
    </lineage>
</organism>
<name>ACPS_ALTMD</name>
<proteinExistence type="inferred from homology"/>
<sequence>MAIAGLGTDIVEISRLGKGDTANERLAKRVLTPAEWQQFCEHARPVRFLAKRFAAKEAAVKALGTGIGNGISWQHIEVRNNNLGAPELHFSGEFAAMCEARGITRSVVSISDEQHYAVATVILETV</sequence>
<comment type="function">
    <text evidence="1">Transfers the 4'-phosphopantetheine moiety from coenzyme A to a Ser of acyl-carrier-protein.</text>
</comment>
<comment type="catalytic activity">
    <reaction evidence="1">
        <text>apo-[ACP] + CoA = holo-[ACP] + adenosine 3',5'-bisphosphate + H(+)</text>
        <dbReference type="Rhea" id="RHEA:12068"/>
        <dbReference type="Rhea" id="RHEA-COMP:9685"/>
        <dbReference type="Rhea" id="RHEA-COMP:9690"/>
        <dbReference type="ChEBI" id="CHEBI:15378"/>
        <dbReference type="ChEBI" id="CHEBI:29999"/>
        <dbReference type="ChEBI" id="CHEBI:57287"/>
        <dbReference type="ChEBI" id="CHEBI:58343"/>
        <dbReference type="ChEBI" id="CHEBI:64479"/>
        <dbReference type="EC" id="2.7.8.7"/>
    </reaction>
</comment>
<comment type="cofactor">
    <cofactor evidence="1">
        <name>Mg(2+)</name>
        <dbReference type="ChEBI" id="CHEBI:18420"/>
    </cofactor>
</comment>
<comment type="subcellular location">
    <subcellularLocation>
        <location evidence="1">Cytoplasm</location>
    </subcellularLocation>
</comment>
<comment type="similarity">
    <text evidence="1">Belongs to the P-Pant transferase superfamily. AcpS family.</text>
</comment>
<keyword id="KW-0963">Cytoplasm</keyword>
<keyword id="KW-0275">Fatty acid biosynthesis</keyword>
<keyword id="KW-0276">Fatty acid metabolism</keyword>
<keyword id="KW-0444">Lipid biosynthesis</keyword>
<keyword id="KW-0443">Lipid metabolism</keyword>
<keyword id="KW-0460">Magnesium</keyword>
<keyword id="KW-0479">Metal-binding</keyword>
<keyword id="KW-0808">Transferase</keyword>
<accession>B4RXM9</accession>
<accession>F2GA28</accession>
<dbReference type="EC" id="2.7.8.7" evidence="1"/>
<dbReference type="EMBL" id="CP001103">
    <property type="protein sequence ID" value="AEA96955.1"/>
    <property type="molecule type" value="Genomic_DNA"/>
</dbReference>
<dbReference type="RefSeq" id="WP_012517309.1">
    <property type="nucleotide sequence ID" value="NC_011138.3"/>
</dbReference>
<dbReference type="SMR" id="B4RXM9"/>
<dbReference type="KEGG" id="amc:MADE_1004035"/>
<dbReference type="HOGENOM" id="CLU_089696_3_1_6"/>
<dbReference type="Proteomes" id="UP000001870">
    <property type="component" value="Chromosome"/>
</dbReference>
<dbReference type="GO" id="GO:0005737">
    <property type="term" value="C:cytoplasm"/>
    <property type="evidence" value="ECO:0007669"/>
    <property type="project" value="UniProtKB-SubCell"/>
</dbReference>
<dbReference type="GO" id="GO:0008897">
    <property type="term" value="F:holo-[acyl-carrier-protein] synthase activity"/>
    <property type="evidence" value="ECO:0007669"/>
    <property type="project" value="UniProtKB-UniRule"/>
</dbReference>
<dbReference type="GO" id="GO:0000287">
    <property type="term" value="F:magnesium ion binding"/>
    <property type="evidence" value="ECO:0007669"/>
    <property type="project" value="UniProtKB-UniRule"/>
</dbReference>
<dbReference type="GO" id="GO:0006633">
    <property type="term" value="P:fatty acid biosynthetic process"/>
    <property type="evidence" value="ECO:0007669"/>
    <property type="project" value="UniProtKB-UniRule"/>
</dbReference>
<dbReference type="FunFam" id="3.90.470.20:FF:000001">
    <property type="entry name" value="Holo-[acyl-carrier-protein] synthase"/>
    <property type="match status" value="1"/>
</dbReference>
<dbReference type="Gene3D" id="3.90.470.20">
    <property type="entry name" value="4'-phosphopantetheinyl transferase domain"/>
    <property type="match status" value="1"/>
</dbReference>
<dbReference type="HAMAP" id="MF_00101">
    <property type="entry name" value="AcpS"/>
    <property type="match status" value="1"/>
</dbReference>
<dbReference type="InterPro" id="IPR008278">
    <property type="entry name" value="4-PPantetheinyl_Trfase_dom"/>
</dbReference>
<dbReference type="InterPro" id="IPR037143">
    <property type="entry name" value="4-PPantetheinyl_Trfase_dom_sf"/>
</dbReference>
<dbReference type="InterPro" id="IPR002582">
    <property type="entry name" value="ACPS"/>
</dbReference>
<dbReference type="InterPro" id="IPR004568">
    <property type="entry name" value="Ppantetheine-prot_Trfase_dom"/>
</dbReference>
<dbReference type="NCBIfam" id="TIGR00516">
    <property type="entry name" value="acpS"/>
    <property type="match status" value="1"/>
</dbReference>
<dbReference type="NCBIfam" id="TIGR00556">
    <property type="entry name" value="pantethn_trn"/>
    <property type="match status" value="1"/>
</dbReference>
<dbReference type="Pfam" id="PF01648">
    <property type="entry name" value="ACPS"/>
    <property type="match status" value="1"/>
</dbReference>
<dbReference type="SUPFAM" id="SSF56214">
    <property type="entry name" value="4'-phosphopantetheinyl transferase"/>
    <property type="match status" value="1"/>
</dbReference>
<evidence type="ECO:0000255" key="1">
    <source>
        <dbReference type="HAMAP-Rule" id="MF_00101"/>
    </source>
</evidence>
<reference key="1">
    <citation type="journal article" date="2008" name="ISME J.">
        <title>Comparative genomics of two ecotypes of the marine planktonic copiotroph Alteromonas macleodii suggests alternative lifestyles associated with different kinds of particulate organic matter.</title>
        <authorList>
            <person name="Ivars-Martinez E."/>
            <person name="Martin-Cuadrado A.-B."/>
            <person name="D'Auria G."/>
            <person name="Mira A."/>
            <person name="Ferriera S."/>
            <person name="Johnson J."/>
            <person name="Friedman R."/>
            <person name="Rodriguez-Valera F."/>
        </authorList>
    </citation>
    <scope>NUCLEOTIDE SEQUENCE [LARGE SCALE GENOMIC DNA]</scope>
    <source>
        <strain>DSM 17117 / CIP 110805 / LMG 28347 / Deep ecotype</strain>
    </source>
</reference>
<protein>
    <recommendedName>
        <fullName evidence="1">Holo-[acyl-carrier-protein] synthase</fullName>
        <shortName evidence="1">Holo-ACP synthase</shortName>
        <ecNumber evidence="1">2.7.8.7</ecNumber>
    </recommendedName>
    <alternativeName>
        <fullName evidence="1">4'-phosphopantetheinyl transferase AcpS</fullName>
    </alternativeName>
</protein>
<feature type="chain" id="PRO_1000093852" description="Holo-[acyl-carrier-protein] synthase">
    <location>
        <begin position="1"/>
        <end position="126"/>
    </location>
</feature>
<feature type="binding site" evidence="1">
    <location>
        <position position="9"/>
    </location>
    <ligand>
        <name>Mg(2+)</name>
        <dbReference type="ChEBI" id="CHEBI:18420"/>
    </ligand>
</feature>
<feature type="binding site" evidence="1">
    <location>
        <position position="57"/>
    </location>
    <ligand>
        <name>Mg(2+)</name>
        <dbReference type="ChEBI" id="CHEBI:18420"/>
    </ligand>
</feature>
<gene>
    <name evidence="1" type="primary">acpS</name>
    <name type="ordered locus">MADE_1004035</name>
</gene>